<gene>
    <name evidence="1" type="primary">rpoC</name>
    <name type="ordered locus">Swit_3467</name>
</gene>
<reference key="1">
    <citation type="journal article" date="2010" name="J. Bacteriol.">
        <title>Genome sequence of the dioxin-mineralizing bacterium Sphingomonas wittichii RW1.</title>
        <authorList>
            <person name="Miller T.R."/>
            <person name="Delcher A.L."/>
            <person name="Salzberg S.L."/>
            <person name="Saunders E."/>
            <person name="Detter J.C."/>
            <person name="Halden R.U."/>
        </authorList>
    </citation>
    <scope>NUCLEOTIDE SEQUENCE [LARGE SCALE GENOMIC DNA]</scope>
    <source>
        <strain>DSM 6014 / CCUG 31198 / JCM 15750 / NBRC 105917 / EY 4224 / RW1</strain>
    </source>
</reference>
<proteinExistence type="inferred from homology"/>
<name>RPOC_RHIWR</name>
<protein>
    <recommendedName>
        <fullName evidence="1">DNA-directed RNA polymerase subunit beta'</fullName>
        <shortName evidence="1">RNAP subunit beta'</shortName>
        <ecNumber evidence="1">2.7.7.6</ecNumber>
    </recommendedName>
    <alternativeName>
        <fullName evidence="1">RNA polymerase subunit beta'</fullName>
    </alternativeName>
    <alternativeName>
        <fullName evidence="1">Transcriptase subunit beta'</fullName>
    </alternativeName>
</protein>
<sequence length="1423" mass="157224">MNELTNFANPVAKPETFDQIQIGIASPERIRSWSFGEIKKPETINYRTFKPERDGLFCARIFGPIKDYECLCGKYKRMKYKGIVCEKCGVEVTVSKVRRERMGHIELAAPVAHIWFLKSLPSRIGLLLDMQLKQLERVLYFESYIVIEPGLTPLEKYQLLNEDELLEAQDEYGEDAFSAGIGAEAVRRMLEELDLEGEKEDLLKELAETKSELKPKKIIKRLKVVESFLESGNRPEWMILEVIPVIPPDLRPLVPLDGGRFATSDLNDLYRRVINRNNRLKRLMELRAPDIIVRNEKRMLQESVDALFDNGRRGRTITGANKRPLKSLSDMLKGKQGRFRQNLLGKRVDYSGRSVIVTGPELKLHQCGLPKKMALELFKPFIYARLDAKGLSMTLKQAKKWVEKERKEVWDILDEVIREHPVLLNRAPTLHRLGIQAFEPVLIEGKAIQLHPLVCSAFNADFDGDQMAVHVPLSLEAQLEARVLMMSTNNILSPANGKPIIVPSQDMVLGLYYLSMLKEGEPGEGSLIADMQEVHQALAAKAVTLHTKIISRVPQTDEDGNQYMKRVETTPGRMLLGETLPKSHKVPFETVNRLLTKKEIGDVIDIVYRHTGQKETVLFADAIMALGFRHAFQAGISFGKDDMIIPEAKEKEVEETRLLVKDFEQQYQDGLITQQEKYNKVIDAWSRCGDRVAAEMMKEISAVKKGADGREKPINAIYMMAHSGARGSAAQIKQLAGMRGLMAKPSGEIIETPIISNFKEGLTVLEYFNSTHGARKGLADTALKTANSGYLTRRLVDVSQDCVVVEVDCGTDRALDMKAIVQGGATIASLGERILGRTAAEDIVDSKTNEVLIAEGTLLDEAMVAAVEAIGIQSVKIRSPLVCESKGGVCAACYGRDLARGTPVNIGEAVGVIAAQSIGEPGTQLTMRTFHIGGAAQLNEQSNLESVADGSIEYRELRTITDPRGRRVSLSRSGEVAIIDSEGRERATHRLPYGAHLLLDDGAAVAKGDRIAEWDPFTMPVITETGGIVKYQDLIDNQTLTEQTDEATGISQKVVIEYRATSRKEDLRPRLTLLDDSSGETARYMLAPGAMLSVEDGQEVKAGEVLARVSRESAKTRDITGGLPRVAELFEARKPKENAIIAKVSGRVEFGKDYKAKRKIIIRPDDGSDAVEYLVPKSKVIDVQEGDYVKRGDNLIGGSPDPHDILEVLGIEPLAEYLVSEIQEVYRLQGVKINDKHIETIVRQMLQKVEITDGGDTTLLPGEQVDREEMDEINAKADAEGRTIAQGKPVLLGITKASLQTRSFISAASFQETTRVLTDASVQGKVDTLNGLKENVIVGRLIPAGTGAGMSRLRVTASSRDAALRAAQRNWQESLIAPQTAAEEHAAELRQPVQADTGDDPLGAVVGESHGTDADAGDYLTEE</sequence>
<keyword id="KW-0240">DNA-directed RNA polymerase</keyword>
<keyword id="KW-0460">Magnesium</keyword>
<keyword id="KW-0479">Metal-binding</keyword>
<keyword id="KW-0548">Nucleotidyltransferase</keyword>
<keyword id="KW-1185">Reference proteome</keyword>
<keyword id="KW-0804">Transcription</keyword>
<keyword id="KW-0808">Transferase</keyword>
<keyword id="KW-0862">Zinc</keyword>
<accession>A5VBZ7</accession>
<feature type="chain" id="PRO_0000353440" description="DNA-directed RNA polymerase subunit beta'">
    <location>
        <begin position="1"/>
        <end position="1423"/>
    </location>
</feature>
<feature type="region of interest" description="Disordered" evidence="2">
    <location>
        <begin position="1383"/>
        <end position="1423"/>
    </location>
</feature>
<feature type="binding site" evidence="1">
    <location>
        <position position="70"/>
    </location>
    <ligand>
        <name>Zn(2+)</name>
        <dbReference type="ChEBI" id="CHEBI:29105"/>
        <label>1</label>
    </ligand>
</feature>
<feature type="binding site" evidence="1">
    <location>
        <position position="72"/>
    </location>
    <ligand>
        <name>Zn(2+)</name>
        <dbReference type="ChEBI" id="CHEBI:29105"/>
        <label>1</label>
    </ligand>
</feature>
<feature type="binding site" evidence="1">
    <location>
        <position position="85"/>
    </location>
    <ligand>
        <name>Zn(2+)</name>
        <dbReference type="ChEBI" id="CHEBI:29105"/>
        <label>1</label>
    </ligand>
</feature>
<feature type="binding site" evidence="1">
    <location>
        <position position="88"/>
    </location>
    <ligand>
        <name>Zn(2+)</name>
        <dbReference type="ChEBI" id="CHEBI:29105"/>
        <label>1</label>
    </ligand>
</feature>
<feature type="binding site" evidence="1">
    <location>
        <position position="461"/>
    </location>
    <ligand>
        <name>Mg(2+)</name>
        <dbReference type="ChEBI" id="CHEBI:18420"/>
    </ligand>
</feature>
<feature type="binding site" evidence="1">
    <location>
        <position position="463"/>
    </location>
    <ligand>
        <name>Mg(2+)</name>
        <dbReference type="ChEBI" id="CHEBI:18420"/>
    </ligand>
</feature>
<feature type="binding site" evidence="1">
    <location>
        <position position="465"/>
    </location>
    <ligand>
        <name>Mg(2+)</name>
        <dbReference type="ChEBI" id="CHEBI:18420"/>
    </ligand>
</feature>
<feature type="binding site" evidence="1">
    <location>
        <position position="809"/>
    </location>
    <ligand>
        <name>Zn(2+)</name>
        <dbReference type="ChEBI" id="CHEBI:29105"/>
        <label>2</label>
    </ligand>
</feature>
<feature type="binding site" evidence="1">
    <location>
        <position position="883"/>
    </location>
    <ligand>
        <name>Zn(2+)</name>
        <dbReference type="ChEBI" id="CHEBI:29105"/>
        <label>2</label>
    </ligand>
</feature>
<feature type="binding site" evidence="1">
    <location>
        <position position="890"/>
    </location>
    <ligand>
        <name>Zn(2+)</name>
        <dbReference type="ChEBI" id="CHEBI:29105"/>
        <label>2</label>
    </ligand>
</feature>
<feature type="binding site" evidence="1">
    <location>
        <position position="893"/>
    </location>
    <ligand>
        <name>Zn(2+)</name>
        <dbReference type="ChEBI" id="CHEBI:29105"/>
        <label>2</label>
    </ligand>
</feature>
<comment type="function">
    <text evidence="1">DNA-dependent RNA polymerase catalyzes the transcription of DNA into RNA using the four ribonucleoside triphosphates as substrates.</text>
</comment>
<comment type="catalytic activity">
    <reaction evidence="1">
        <text>RNA(n) + a ribonucleoside 5'-triphosphate = RNA(n+1) + diphosphate</text>
        <dbReference type="Rhea" id="RHEA:21248"/>
        <dbReference type="Rhea" id="RHEA-COMP:14527"/>
        <dbReference type="Rhea" id="RHEA-COMP:17342"/>
        <dbReference type="ChEBI" id="CHEBI:33019"/>
        <dbReference type="ChEBI" id="CHEBI:61557"/>
        <dbReference type="ChEBI" id="CHEBI:140395"/>
        <dbReference type="EC" id="2.7.7.6"/>
    </reaction>
</comment>
<comment type="cofactor">
    <cofactor evidence="1">
        <name>Mg(2+)</name>
        <dbReference type="ChEBI" id="CHEBI:18420"/>
    </cofactor>
    <text evidence="1">Binds 1 Mg(2+) ion per subunit.</text>
</comment>
<comment type="cofactor">
    <cofactor evidence="1">
        <name>Zn(2+)</name>
        <dbReference type="ChEBI" id="CHEBI:29105"/>
    </cofactor>
    <text evidence="1">Binds 2 Zn(2+) ions per subunit.</text>
</comment>
<comment type="subunit">
    <text evidence="1">The RNAP catalytic core consists of 2 alpha, 1 beta, 1 beta' and 1 omega subunit. When a sigma factor is associated with the core the holoenzyme is formed, which can initiate transcription.</text>
</comment>
<comment type="similarity">
    <text evidence="1">Belongs to the RNA polymerase beta' chain family.</text>
</comment>
<evidence type="ECO:0000255" key="1">
    <source>
        <dbReference type="HAMAP-Rule" id="MF_01322"/>
    </source>
</evidence>
<evidence type="ECO:0000256" key="2">
    <source>
        <dbReference type="SAM" id="MobiDB-lite"/>
    </source>
</evidence>
<organism>
    <name type="scientific">Rhizorhabdus wittichii (strain DSM 6014 / CCUG 31198 / JCM 15750 / NBRC 105917 / EY 4224 / RW1)</name>
    <name type="common">Sphingomonas wittichii</name>
    <dbReference type="NCBI Taxonomy" id="392499"/>
    <lineage>
        <taxon>Bacteria</taxon>
        <taxon>Pseudomonadati</taxon>
        <taxon>Pseudomonadota</taxon>
        <taxon>Alphaproteobacteria</taxon>
        <taxon>Sphingomonadales</taxon>
        <taxon>Sphingomonadaceae</taxon>
        <taxon>Rhizorhabdus</taxon>
    </lineage>
</organism>
<dbReference type="EC" id="2.7.7.6" evidence="1"/>
<dbReference type="EMBL" id="CP000699">
    <property type="protein sequence ID" value="ABQ69813.1"/>
    <property type="molecule type" value="Genomic_DNA"/>
</dbReference>
<dbReference type="SMR" id="A5VBZ7"/>
<dbReference type="STRING" id="392499.Swit_3467"/>
<dbReference type="PaxDb" id="392499-Swit_3467"/>
<dbReference type="KEGG" id="swi:Swit_3467"/>
<dbReference type="eggNOG" id="COG0086">
    <property type="taxonomic scope" value="Bacteria"/>
</dbReference>
<dbReference type="HOGENOM" id="CLU_000524_3_1_5"/>
<dbReference type="OrthoDB" id="9815296at2"/>
<dbReference type="Proteomes" id="UP000001989">
    <property type="component" value="Chromosome"/>
</dbReference>
<dbReference type="GO" id="GO:0000428">
    <property type="term" value="C:DNA-directed RNA polymerase complex"/>
    <property type="evidence" value="ECO:0007669"/>
    <property type="project" value="UniProtKB-KW"/>
</dbReference>
<dbReference type="GO" id="GO:0003677">
    <property type="term" value="F:DNA binding"/>
    <property type="evidence" value="ECO:0007669"/>
    <property type="project" value="UniProtKB-UniRule"/>
</dbReference>
<dbReference type="GO" id="GO:0003899">
    <property type="term" value="F:DNA-directed RNA polymerase activity"/>
    <property type="evidence" value="ECO:0007669"/>
    <property type="project" value="UniProtKB-UniRule"/>
</dbReference>
<dbReference type="GO" id="GO:0000287">
    <property type="term" value="F:magnesium ion binding"/>
    <property type="evidence" value="ECO:0007669"/>
    <property type="project" value="UniProtKB-UniRule"/>
</dbReference>
<dbReference type="GO" id="GO:0008270">
    <property type="term" value="F:zinc ion binding"/>
    <property type="evidence" value="ECO:0007669"/>
    <property type="project" value="UniProtKB-UniRule"/>
</dbReference>
<dbReference type="GO" id="GO:0006351">
    <property type="term" value="P:DNA-templated transcription"/>
    <property type="evidence" value="ECO:0007669"/>
    <property type="project" value="UniProtKB-UniRule"/>
</dbReference>
<dbReference type="CDD" id="cd02655">
    <property type="entry name" value="RNAP_beta'_C"/>
    <property type="match status" value="1"/>
</dbReference>
<dbReference type="CDD" id="cd01609">
    <property type="entry name" value="RNAP_beta'_N"/>
    <property type="match status" value="1"/>
</dbReference>
<dbReference type="FunFam" id="1.10.132.30:FF:000003">
    <property type="entry name" value="DNA-directed RNA polymerase subunit beta"/>
    <property type="match status" value="1"/>
</dbReference>
<dbReference type="FunFam" id="4.10.860.120:FF:000001">
    <property type="entry name" value="DNA-directed RNA polymerase subunit beta"/>
    <property type="match status" value="1"/>
</dbReference>
<dbReference type="Gene3D" id="1.10.132.30">
    <property type="match status" value="1"/>
</dbReference>
<dbReference type="Gene3D" id="1.10.150.390">
    <property type="match status" value="1"/>
</dbReference>
<dbReference type="Gene3D" id="1.10.1790.20">
    <property type="match status" value="1"/>
</dbReference>
<dbReference type="Gene3D" id="1.10.40.90">
    <property type="match status" value="1"/>
</dbReference>
<dbReference type="Gene3D" id="2.40.40.20">
    <property type="match status" value="1"/>
</dbReference>
<dbReference type="Gene3D" id="2.40.50.100">
    <property type="match status" value="3"/>
</dbReference>
<dbReference type="Gene3D" id="4.10.860.120">
    <property type="entry name" value="RNA polymerase II, clamp domain"/>
    <property type="match status" value="1"/>
</dbReference>
<dbReference type="Gene3D" id="1.10.274.100">
    <property type="entry name" value="RNA polymerase Rpb1, domain 3"/>
    <property type="match status" value="2"/>
</dbReference>
<dbReference type="HAMAP" id="MF_01322">
    <property type="entry name" value="RNApol_bact_RpoC"/>
    <property type="match status" value="1"/>
</dbReference>
<dbReference type="InterPro" id="IPR045867">
    <property type="entry name" value="DNA-dir_RpoC_beta_prime"/>
</dbReference>
<dbReference type="InterPro" id="IPR012754">
    <property type="entry name" value="DNA-dir_RpoC_beta_prime_bact"/>
</dbReference>
<dbReference type="InterPro" id="IPR000722">
    <property type="entry name" value="RNA_pol_asu"/>
</dbReference>
<dbReference type="InterPro" id="IPR006592">
    <property type="entry name" value="RNA_pol_N"/>
</dbReference>
<dbReference type="InterPro" id="IPR007080">
    <property type="entry name" value="RNA_pol_Rpb1_1"/>
</dbReference>
<dbReference type="InterPro" id="IPR007066">
    <property type="entry name" value="RNA_pol_Rpb1_3"/>
</dbReference>
<dbReference type="InterPro" id="IPR042102">
    <property type="entry name" value="RNA_pol_Rpb1_3_sf"/>
</dbReference>
<dbReference type="InterPro" id="IPR007083">
    <property type="entry name" value="RNA_pol_Rpb1_4"/>
</dbReference>
<dbReference type="InterPro" id="IPR007081">
    <property type="entry name" value="RNA_pol_Rpb1_5"/>
</dbReference>
<dbReference type="InterPro" id="IPR044893">
    <property type="entry name" value="RNA_pol_Rpb1_clamp_domain"/>
</dbReference>
<dbReference type="InterPro" id="IPR038120">
    <property type="entry name" value="Rpb1_funnel_sf"/>
</dbReference>
<dbReference type="NCBIfam" id="TIGR02386">
    <property type="entry name" value="rpoC_TIGR"/>
    <property type="match status" value="1"/>
</dbReference>
<dbReference type="PANTHER" id="PTHR19376">
    <property type="entry name" value="DNA-DIRECTED RNA POLYMERASE"/>
    <property type="match status" value="1"/>
</dbReference>
<dbReference type="PANTHER" id="PTHR19376:SF54">
    <property type="entry name" value="DNA-DIRECTED RNA POLYMERASE SUBUNIT BETA"/>
    <property type="match status" value="1"/>
</dbReference>
<dbReference type="Pfam" id="PF04997">
    <property type="entry name" value="RNA_pol_Rpb1_1"/>
    <property type="match status" value="1"/>
</dbReference>
<dbReference type="Pfam" id="PF00623">
    <property type="entry name" value="RNA_pol_Rpb1_2"/>
    <property type="match status" value="1"/>
</dbReference>
<dbReference type="Pfam" id="PF04983">
    <property type="entry name" value="RNA_pol_Rpb1_3"/>
    <property type="match status" value="1"/>
</dbReference>
<dbReference type="Pfam" id="PF05000">
    <property type="entry name" value="RNA_pol_Rpb1_4"/>
    <property type="match status" value="1"/>
</dbReference>
<dbReference type="Pfam" id="PF04998">
    <property type="entry name" value="RNA_pol_Rpb1_5"/>
    <property type="match status" value="1"/>
</dbReference>
<dbReference type="SMART" id="SM00663">
    <property type="entry name" value="RPOLA_N"/>
    <property type="match status" value="1"/>
</dbReference>
<dbReference type="SUPFAM" id="SSF64484">
    <property type="entry name" value="beta and beta-prime subunits of DNA dependent RNA-polymerase"/>
    <property type="match status" value="1"/>
</dbReference>